<name>RL28_LISW6</name>
<gene>
    <name evidence="1" type="primary">rpmB</name>
    <name type="ordered locus">lwe1835</name>
</gene>
<protein>
    <recommendedName>
        <fullName evidence="1">Large ribosomal subunit protein bL28</fullName>
    </recommendedName>
    <alternativeName>
        <fullName evidence="3">50S ribosomal protein L28</fullName>
    </alternativeName>
</protein>
<dbReference type="EMBL" id="AM263198">
    <property type="protein sequence ID" value="CAK21253.1"/>
    <property type="molecule type" value="Genomic_DNA"/>
</dbReference>
<dbReference type="RefSeq" id="WP_003720131.1">
    <property type="nucleotide sequence ID" value="NC_008555.1"/>
</dbReference>
<dbReference type="SMR" id="A0AJS1"/>
<dbReference type="STRING" id="386043.lwe1835"/>
<dbReference type="GeneID" id="93239727"/>
<dbReference type="KEGG" id="lwe:lwe1835"/>
<dbReference type="eggNOG" id="COG0227">
    <property type="taxonomic scope" value="Bacteria"/>
</dbReference>
<dbReference type="HOGENOM" id="CLU_064548_7_1_9"/>
<dbReference type="OrthoDB" id="9805609at2"/>
<dbReference type="Proteomes" id="UP000000779">
    <property type="component" value="Chromosome"/>
</dbReference>
<dbReference type="GO" id="GO:1990904">
    <property type="term" value="C:ribonucleoprotein complex"/>
    <property type="evidence" value="ECO:0007669"/>
    <property type="project" value="UniProtKB-KW"/>
</dbReference>
<dbReference type="GO" id="GO:0005840">
    <property type="term" value="C:ribosome"/>
    <property type="evidence" value="ECO:0007669"/>
    <property type="project" value="UniProtKB-KW"/>
</dbReference>
<dbReference type="GO" id="GO:0003735">
    <property type="term" value="F:structural constituent of ribosome"/>
    <property type="evidence" value="ECO:0007669"/>
    <property type="project" value="InterPro"/>
</dbReference>
<dbReference type="GO" id="GO:0006412">
    <property type="term" value="P:translation"/>
    <property type="evidence" value="ECO:0007669"/>
    <property type="project" value="UniProtKB-UniRule"/>
</dbReference>
<dbReference type="Gene3D" id="2.30.170.40">
    <property type="entry name" value="Ribosomal protein L28/L24"/>
    <property type="match status" value="1"/>
</dbReference>
<dbReference type="HAMAP" id="MF_00373">
    <property type="entry name" value="Ribosomal_bL28"/>
    <property type="match status" value="1"/>
</dbReference>
<dbReference type="InterPro" id="IPR050096">
    <property type="entry name" value="Bacterial_rp_bL28"/>
</dbReference>
<dbReference type="InterPro" id="IPR026569">
    <property type="entry name" value="Ribosomal_bL28"/>
</dbReference>
<dbReference type="InterPro" id="IPR034704">
    <property type="entry name" value="Ribosomal_bL28/bL31-like_sf"/>
</dbReference>
<dbReference type="InterPro" id="IPR001383">
    <property type="entry name" value="Ribosomal_bL28_bact-type"/>
</dbReference>
<dbReference type="InterPro" id="IPR037147">
    <property type="entry name" value="Ribosomal_bL28_sf"/>
</dbReference>
<dbReference type="NCBIfam" id="TIGR00009">
    <property type="entry name" value="L28"/>
    <property type="match status" value="1"/>
</dbReference>
<dbReference type="PANTHER" id="PTHR39080">
    <property type="entry name" value="50S RIBOSOMAL PROTEIN L28"/>
    <property type="match status" value="1"/>
</dbReference>
<dbReference type="PANTHER" id="PTHR39080:SF1">
    <property type="entry name" value="LARGE RIBOSOMAL SUBUNIT PROTEIN BL28A"/>
    <property type="match status" value="1"/>
</dbReference>
<dbReference type="Pfam" id="PF00830">
    <property type="entry name" value="Ribosomal_L28"/>
    <property type="match status" value="1"/>
</dbReference>
<dbReference type="SUPFAM" id="SSF143800">
    <property type="entry name" value="L28p-like"/>
    <property type="match status" value="1"/>
</dbReference>
<proteinExistence type="inferred from homology"/>
<reference key="1">
    <citation type="journal article" date="2006" name="J. Bacteriol.">
        <title>Whole-genome sequence of Listeria welshimeri reveals common steps in genome reduction with Listeria innocua as compared to Listeria monocytogenes.</title>
        <authorList>
            <person name="Hain T."/>
            <person name="Steinweg C."/>
            <person name="Kuenne C.T."/>
            <person name="Billion A."/>
            <person name="Ghai R."/>
            <person name="Chatterjee S.S."/>
            <person name="Domann E."/>
            <person name="Kaerst U."/>
            <person name="Goesmann A."/>
            <person name="Bekel T."/>
            <person name="Bartels D."/>
            <person name="Kaiser O."/>
            <person name="Meyer F."/>
            <person name="Puehler A."/>
            <person name="Weisshaar B."/>
            <person name="Wehland J."/>
            <person name="Liang C."/>
            <person name="Dandekar T."/>
            <person name="Lampidis R."/>
            <person name="Kreft J."/>
            <person name="Goebel W."/>
            <person name="Chakraborty T."/>
        </authorList>
    </citation>
    <scope>NUCLEOTIDE SEQUENCE [LARGE SCALE GENOMIC DNA]</scope>
    <source>
        <strain>ATCC 35897 / DSM 20650 / CCUG 15529 / CIP 8149 / NCTC 11857 / SLCC 5334 / V8</strain>
    </source>
</reference>
<organism>
    <name type="scientific">Listeria welshimeri serovar 6b (strain ATCC 35897 / DSM 20650 / CCUG 15529 / CIP 8149 / NCTC 11857 / SLCC 5334 / V8)</name>
    <dbReference type="NCBI Taxonomy" id="386043"/>
    <lineage>
        <taxon>Bacteria</taxon>
        <taxon>Bacillati</taxon>
        <taxon>Bacillota</taxon>
        <taxon>Bacilli</taxon>
        <taxon>Bacillales</taxon>
        <taxon>Listeriaceae</taxon>
        <taxon>Listeria</taxon>
    </lineage>
</organism>
<keyword id="KW-0687">Ribonucleoprotein</keyword>
<keyword id="KW-0689">Ribosomal protein</keyword>
<feature type="chain" id="PRO_1000007271" description="Large ribosomal subunit protein bL28">
    <location>
        <begin position="1"/>
        <end position="62"/>
    </location>
</feature>
<feature type="region of interest" description="Disordered" evidence="2">
    <location>
        <begin position="1"/>
        <end position="27"/>
    </location>
</feature>
<feature type="compositionally biased region" description="Basic residues" evidence="2">
    <location>
        <begin position="10"/>
        <end position="20"/>
    </location>
</feature>
<comment type="similarity">
    <text evidence="1">Belongs to the bacterial ribosomal protein bL28 family.</text>
</comment>
<accession>A0AJS1</accession>
<sequence length="62" mass="6991">MAKECVITGRKSRSGNKRSHAMNSSKRTWKANLQKVRILVNGKPKKVWVSARALKSGKVERV</sequence>
<evidence type="ECO:0000255" key="1">
    <source>
        <dbReference type="HAMAP-Rule" id="MF_00373"/>
    </source>
</evidence>
<evidence type="ECO:0000256" key="2">
    <source>
        <dbReference type="SAM" id="MobiDB-lite"/>
    </source>
</evidence>
<evidence type="ECO:0000305" key="3"/>